<keyword id="KW-0067">ATP-binding</keyword>
<keyword id="KW-0347">Helicase</keyword>
<keyword id="KW-0378">Hydrolase</keyword>
<keyword id="KW-0547">Nucleotide-binding</keyword>
<keyword id="KW-0539">Nucleus</keyword>
<keyword id="KW-1185">Reference proteome</keyword>
<keyword id="KW-0690">Ribosome biogenesis</keyword>
<keyword id="KW-0694">RNA-binding</keyword>
<keyword id="KW-0698">rRNA processing</keyword>
<comment type="function">
    <text evidence="1">ATP-dependent RNA helicase involved in 40S ribosomal subunit biogenesis. Required for the processing and cleavage of 35S pre-rRNA at sites A0, A1, and A2, leading to mature 18S rRNA (By similarity).</text>
</comment>
<comment type="catalytic activity">
    <reaction>
        <text>ATP + H2O = ADP + phosphate + H(+)</text>
        <dbReference type="Rhea" id="RHEA:13065"/>
        <dbReference type="ChEBI" id="CHEBI:15377"/>
        <dbReference type="ChEBI" id="CHEBI:15378"/>
        <dbReference type="ChEBI" id="CHEBI:30616"/>
        <dbReference type="ChEBI" id="CHEBI:43474"/>
        <dbReference type="ChEBI" id="CHEBI:456216"/>
        <dbReference type="EC" id="3.6.4.13"/>
    </reaction>
</comment>
<comment type="subcellular location">
    <subcellularLocation>
        <location evidence="1">Nucleus</location>
        <location evidence="1">Nucleolus</location>
    </subcellularLocation>
</comment>
<comment type="domain">
    <text>The Q motif is unique to and characteristic of the DEAD box family of RNA helicases and controls ATP binding and hydrolysis.</text>
</comment>
<comment type="similarity">
    <text evidence="4">Belongs to the DEAD box helicase family. DDX48/FAL1 subfamily.</text>
</comment>
<proteinExistence type="inferred from homology"/>
<name>FAL1_EMENI</name>
<reference key="1">
    <citation type="journal article" date="2005" name="Nature">
        <title>Sequencing of Aspergillus nidulans and comparative analysis with A. fumigatus and A. oryzae.</title>
        <authorList>
            <person name="Galagan J.E."/>
            <person name="Calvo S.E."/>
            <person name="Cuomo C."/>
            <person name="Ma L.-J."/>
            <person name="Wortman J.R."/>
            <person name="Batzoglou S."/>
            <person name="Lee S.-I."/>
            <person name="Bastuerkmen M."/>
            <person name="Spevak C.C."/>
            <person name="Clutterbuck J."/>
            <person name="Kapitonov V."/>
            <person name="Jurka J."/>
            <person name="Scazzocchio C."/>
            <person name="Farman M.L."/>
            <person name="Butler J."/>
            <person name="Purcell S."/>
            <person name="Harris S."/>
            <person name="Braus G.H."/>
            <person name="Draht O."/>
            <person name="Busch S."/>
            <person name="D'Enfert C."/>
            <person name="Bouchier C."/>
            <person name="Goldman G.H."/>
            <person name="Bell-Pedersen D."/>
            <person name="Griffiths-Jones S."/>
            <person name="Doonan J.H."/>
            <person name="Yu J."/>
            <person name="Vienken K."/>
            <person name="Pain A."/>
            <person name="Freitag M."/>
            <person name="Selker E.U."/>
            <person name="Archer D.B."/>
            <person name="Penalva M.A."/>
            <person name="Oakley B.R."/>
            <person name="Momany M."/>
            <person name="Tanaka T."/>
            <person name="Kumagai T."/>
            <person name="Asai K."/>
            <person name="Machida M."/>
            <person name="Nierman W.C."/>
            <person name="Denning D.W."/>
            <person name="Caddick M.X."/>
            <person name="Hynes M."/>
            <person name="Paoletti M."/>
            <person name="Fischer R."/>
            <person name="Miller B.L."/>
            <person name="Dyer P.S."/>
            <person name="Sachs M.S."/>
            <person name="Osmani S.A."/>
            <person name="Birren B.W."/>
        </authorList>
    </citation>
    <scope>NUCLEOTIDE SEQUENCE [LARGE SCALE GENOMIC DNA]</scope>
    <source>
        <strain>FGSC A4 / ATCC 38163 / CBS 112.46 / NRRL 194 / M139</strain>
    </source>
</reference>
<reference key="2">
    <citation type="journal article" date="2009" name="Fungal Genet. Biol.">
        <title>The 2008 update of the Aspergillus nidulans genome annotation: a community effort.</title>
        <authorList>
            <person name="Wortman J.R."/>
            <person name="Gilsenan J.M."/>
            <person name="Joardar V."/>
            <person name="Deegan J."/>
            <person name="Clutterbuck J."/>
            <person name="Andersen M.R."/>
            <person name="Archer D."/>
            <person name="Bencina M."/>
            <person name="Braus G."/>
            <person name="Coutinho P."/>
            <person name="von Dohren H."/>
            <person name="Doonan J."/>
            <person name="Driessen A.J."/>
            <person name="Durek P."/>
            <person name="Espeso E."/>
            <person name="Fekete E."/>
            <person name="Flipphi M."/>
            <person name="Estrada C.G."/>
            <person name="Geysens S."/>
            <person name="Goldman G."/>
            <person name="de Groot P.W."/>
            <person name="Hansen K."/>
            <person name="Harris S.D."/>
            <person name="Heinekamp T."/>
            <person name="Helmstaedt K."/>
            <person name="Henrissat B."/>
            <person name="Hofmann G."/>
            <person name="Homan T."/>
            <person name="Horio T."/>
            <person name="Horiuchi H."/>
            <person name="James S."/>
            <person name="Jones M."/>
            <person name="Karaffa L."/>
            <person name="Karanyi Z."/>
            <person name="Kato M."/>
            <person name="Keller N."/>
            <person name="Kelly D.E."/>
            <person name="Kiel J.A."/>
            <person name="Kim J.M."/>
            <person name="van der Klei I.J."/>
            <person name="Klis F.M."/>
            <person name="Kovalchuk A."/>
            <person name="Krasevec N."/>
            <person name="Kubicek C.P."/>
            <person name="Liu B."/>
            <person name="Maccabe A."/>
            <person name="Meyer V."/>
            <person name="Mirabito P."/>
            <person name="Miskei M."/>
            <person name="Mos M."/>
            <person name="Mullins J."/>
            <person name="Nelson D.R."/>
            <person name="Nielsen J."/>
            <person name="Oakley B.R."/>
            <person name="Osmani S.A."/>
            <person name="Pakula T."/>
            <person name="Paszewski A."/>
            <person name="Paulsen I."/>
            <person name="Pilsyk S."/>
            <person name="Pocsi I."/>
            <person name="Punt P.J."/>
            <person name="Ram A.F."/>
            <person name="Ren Q."/>
            <person name="Robellet X."/>
            <person name="Robson G."/>
            <person name="Seiboth B."/>
            <person name="van Solingen P."/>
            <person name="Specht T."/>
            <person name="Sun J."/>
            <person name="Taheri-Talesh N."/>
            <person name="Takeshita N."/>
            <person name="Ussery D."/>
            <person name="vanKuyk P.A."/>
            <person name="Visser H."/>
            <person name="van de Vondervoort P.J."/>
            <person name="de Vries R.P."/>
            <person name="Walton J."/>
            <person name="Xiang X."/>
            <person name="Xiong Y."/>
            <person name="Zeng A.P."/>
            <person name="Brandt B.W."/>
            <person name="Cornell M.J."/>
            <person name="van den Hondel C.A."/>
            <person name="Visser J."/>
            <person name="Oliver S.G."/>
            <person name="Turner G."/>
        </authorList>
    </citation>
    <scope>GENOME REANNOTATION</scope>
    <source>
        <strain>FGSC A4 / ATCC 38163 / CBS 112.46 / NRRL 194 / M139</strain>
    </source>
</reference>
<evidence type="ECO:0000250" key="1"/>
<evidence type="ECO:0000255" key="2">
    <source>
        <dbReference type="PROSITE-ProRule" id="PRU00541"/>
    </source>
</evidence>
<evidence type="ECO:0000255" key="3">
    <source>
        <dbReference type="PROSITE-ProRule" id="PRU00542"/>
    </source>
</evidence>
<evidence type="ECO:0000305" key="4"/>
<organism>
    <name type="scientific">Emericella nidulans (strain FGSC A4 / ATCC 38163 / CBS 112.46 / NRRL 194 / M139)</name>
    <name type="common">Aspergillus nidulans</name>
    <dbReference type="NCBI Taxonomy" id="227321"/>
    <lineage>
        <taxon>Eukaryota</taxon>
        <taxon>Fungi</taxon>
        <taxon>Dikarya</taxon>
        <taxon>Ascomycota</taxon>
        <taxon>Pezizomycotina</taxon>
        <taxon>Eurotiomycetes</taxon>
        <taxon>Eurotiomycetidae</taxon>
        <taxon>Eurotiales</taxon>
        <taxon>Aspergillaceae</taxon>
        <taxon>Aspergillus</taxon>
        <taxon>Aspergillus subgen. Nidulantes</taxon>
    </lineage>
</organism>
<sequence length="399" mass="45447">MADGIDRRADDKMEFNTSKEVTVAPTFEDMHLKESLLRGIYAYGYESPSAVQSRAIVQICKGRDTIAQAQSGTGKTATFSISALQVIDTVVRETQALVLSPTRELATQIQSVIMALGDYMNVQCHACIGGTNIGEDIRKLDYGQHVVSGTPGRVADMIRRRHLRTRHIKMLVLDEADELLNRGFREQIYDVYRYLPPATQVVVVSATLPYDVLDMTTKFMTDPVRVLVKRDELTLEGIKQYFIAVEKEEWKFDTLCDLYDTLTITQAVIFCNTRRKVDWLTDKMREANFTVSSMHGEMPQKERDSIMQDFRQGNSRVLISTDVWARGIDVQQVSLVINYDLPTNRENYIHRIGRSGRFGRKGVAINFVTSDDVRILRDIELYYSTQIDEMPMNVADLLS</sequence>
<gene>
    <name type="primary">fal1</name>
    <name type="ORF">AN8016</name>
</gene>
<feature type="chain" id="PRO_0000232147" description="ATP-dependent RNA helicase fal1">
    <location>
        <begin position="1"/>
        <end position="399"/>
    </location>
</feature>
<feature type="domain" description="Helicase ATP-binding" evidence="2">
    <location>
        <begin position="56"/>
        <end position="226"/>
    </location>
</feature>
<feature type="domain" description="Helicase C-terminal" evidence="3">
    <location>
        <begin position="237"/>
        <end position="398"/>
    </location>
</feature>
<feature type="short sequence motif" description="Q motif">
    <location>
        <begin position="25"/>
        <end position="53"/>
    </location>
</feature>
<feature type="short sequence motif" description="DEAD box">
    <location>
        <begin position="174"/>
        <end position="177"/>
    </location>
</feature>
<feature type="binding site" evidence="2">
    <location>
        <begin position="69"/>
        <end position="76"/>
    </location>
    <ligand>
        <name>ATP</name>
        <dbReference type="ChEBI" id="CHEBI:30616"/>
    </ligand>
</feature>
<dbReference type="EC" id="3.6.4.13"/>
<dbReference type="EMBL" id="AACD01000139">
    <property type="protein sequence ID" value="EAA59638.1"/>
    <property type="molecule type" value="Genomic_DNA"/>
</dbReference>
<dbReference type="EMBL" id="BN001302">
    <property type="protein sequence ID" value="CBF73711.1"/>
    <property type="molecule type" value="Genomic_DNA"/>
</dbReference>
<dbReference type="RefSeq" id="XP_681285.1">
    <property type="nucleotide sequence ID" value="XM_676193.1"/>
</dbReference>
<dbReference type="SMR" id="Q5AUL4"/>
<dbReference type="FunCoup" id="Q5AUL4">
    <property type="interactions" value="626"/>
</dbReference>
<dbReference type="STRING" id="227321.Q5AUL4"/>
<dbReference type="EnsemblFungi" id="CBF73711">
    <property type="protein sequence ID" value="CBF73711"/>
    <property type="gene ID" value="ANIA_08016"/>
</dbReference>
<dbReference type="KEGG" id="ani:ANIA_08016"/>
<dbReference type="VEuPathDB" id="FungiDB:AN8016"/>
<dbReference type="eggNOG" id="KOG0328">
    <property type="taxonomic scope" value="Eukaryota"/>
</dbReference>
<dbReference type="HOGENOM" id="CLU_003041_1_0_1"/>
<dbReference type="InParanoid" id="Q5AUL4"/>
<dbReference type="OMA" id="TRFHDFK"/>
<dbReference type="OrthoDB" id="10265785at2759"/>
<dbReference type="Proteomes" id="UP000000560">
    <property type="component" value="Chromosome II"/>
</dbReference>
<dbReference type="GO" id="GO:0071013">
    <property type="term" value="C:catalytic step 2 spliceosome"/>
    <property type="evidence" value="ECO:0000318"/>
    <property type="project" value="GO_Central"/>
</dbReference>
<dbReference type="GO" id="GO:0030874">
    <property type="term" value="C:nucleolar chromatin"/>
    <property type="evidence" value="ECO:0007669"/>
    <property type="project" value="EnsemblFungi"/>
</dbReference>
<dbReference type="GO" id="GO:0005730">
    <property type="term" value="C:nucleolus"/>
    <property type="evidence" value="ECO:0000318"/>
    <property type="project" value="GO_Central"/>
</dbReference>
<dbReference type="GO" id="GO:0005524">
    <property type="term" value="F:ATP binding"/>
    <property type="evidence" value="ECO:0007669"/>
    <property type="project" value="UniProtKB-KW"/>
</dbReference>
<dbReference type="GO" id="GO:0016887">
    <property type="term" value="F:ATP hydrolysis activity"/>
    <property type="evidence" value="ECO:0007669"/>
    <property type="project" value="RHEA"/>
</dbReference>
<dbReference type="GO" id="GO:0003729">
    <property type="term" value="F:mRNA binding"/>
    <property type="evidence" value="ECO:0000318"/>
    <property type="project" value="GO_Central"/>
</dbReference>
<dbReference type="GO" id="GO:0003724">
    <property type="term" value="F:RNA helicase activity"/>
    <property type="evidence" value="ECO:0000318"/>
    <property type="project" value="GO_Central"/>
</dbReference>
<dbReference type="GO" id="GO:0000398">
    <property type="term" value="P:mRNA splicing, via spliceosome"/>
    <property type="evidence" value="ECO:0000318"/>
    <property type="project" value="GO_Central"/>
</dbReference>
<dbReference type="GO" id="GO:0006364">
    <property type="term" value="P:rRNA processing"/>
    <property type="evidence" value="ECO:0007669"/>
    <property type="project" value="UniProtKB-KW"/>
</dbReference>
<dbReference type="CDD" id="cd18045">
    <property type="entry name" value="DEADc_EIF4AIII_DDX48"/>
    <property type="match status" value="1"/>
</dbReference>
<dbReference type="CDD" id="cd18787">
    <property type="entry name" value="SF2_C_DEAD"/>
    <property type="match status" value="1"/>
</dbReference>
<dbReference type="FunFam" id="3.40.50.300:FF:000031">
    <property type="entry name" value="Eukaryotic initiation factor 4A-III"/>
    <property type="match status" value="1"/>
</dbReference>
<dbReference type="FunFam" id="3.40.50.300:FF:000498">
    <property type="entry name" value="Eukaryotic initiation factor 4A-III"/>
    <property type="match status" value="1"/>
</dbReference>
<dbReference type="Gene3D" id="3.40.50.300">
    <property type="entry name" value="P-loop containing nucleotide triphosphate hydrolases"/>
    <property type="match status" value="2"/>
</dbReference>
<dbReference type="InterPro" id="IPR011545">
    <property type="entry name" value="DEAD/DEAH_box_helicase_dom"/>
</dbReference>
<dbReference type="InterPro" id="IPR014001">
    <property type="entry name" value="Helicase_ATP-bd"/>
</dbReference>
<dbReference type="InterPro" id="IPR001650">
    <property type="entry name" value="Helicase_C-like"/>
</dbReference>
<dbReference type="InterPro" id="IPR027417">
    <property type="entry name" value="P-loop_NTPase"/>
</dbReference>
<dbReference type="InterPro" id="IPR000629">
    <property type="entry name" value="RNA-helicase_DEAD-box_CS"/>
</dbReference>
<dbReference type="InterPro" id="IPR014014">
    <property type="entry name" value="RNA_helicase_DEAD_Q_motif"/>
</dbReference>
<dbReference type="PANTHER" id="PTHR47958">
    <property type="entry name" value="ATP-DEPENDENT RNA HELICASE DBP3"/>
    <property type="match status" value="1"/>
</dbReference>
<dbReference type="Pfam" id="PF00270">
    <property type="entry name" value="DEAD"/>
    <property type="match status" value="1"/>
</dbReference>
<dbReference type="Pfam" id="PF00271">
    <property type="entry name" value="Helicase_C"/>
    <property type="match status" value="1"/>
</dbReference>
<dbReference type="SMART" id="SM00487">
    <property type="entry name" value="DEXDc"/>
    <property type="match status" value="1"/>
</dbReference>
<dbReference type="SMART" id="SM00490">
    <property type="entry name" value="HELICc"/>
    <property type="match status" value="1"/>
</dbReference>
<dbReference type="SUPFAM" id="SSF52540">
    <property type="entry name" value="P-loop containing nucleoside triphosphate hydrolases"/>
    <property type="match status" value="1"/>
</dbReference>
<dbReference type="PROSITE" id="PS00039">
    <property type="entry name" value="DEAD_ATP_HELICASE"/>
    <property type="match status" value="1"/>
</dbReference>
<dbReference type="PROSITE" id="PS51192">
    <property type="entry name" value="HELICASE_ATP_BIND_1"/>
    <property type="match status" value="1"/>
</dbReference>
<dbReference type="PROSITE" id="PS51194">
    <property type="entry name" value="HELICASE_CTER"/>
    <property type="match status" value="1"/>
</dbReference>
<dbReference type="PROSITE" id="PS51195">
    <property type="entry name" value="Q_MOTIF"/>
    <property type="match status" value="1"/>
</dbReference>
<protein>
    <recommendedName>
        <fullName>ATP-dependent RNA helicase fal1</fullName>
        <ecNumber>3.6.4.13</ecNumber>
    </recommendedName>
</protein>
<accession>Q5AUL4</accession>
<accession>C8V5T2</accession>